<keyword id="KW-0002">3D-structure</keyword>
<keyword id="KW-0877">Alternative promoter usage</keyword>
<keyword id="KW-0025">Alternative splicing</keyword>
<keyword id="KW-0037">Angiogenesis</keyword>
<keyword id="KW-0344">Guanine-nucleotide releasing factor</keyword>
<keyword id="KW-0479">Metal-binding</keyword>
<keyword id="KW-0597">Phosphoprotein</keyword>
<keyword id="KW-1267">Proteomics identification</keyword>
<keyword id="KW-1185">Reference proteome</keyword>
<keyword id="KW-0677">Repeat</keyword>
<keyword id="KW-0727">SH2 domain</keyword>
<keyword id="KW-0728">SH3 domain</keyword>
<keyword id="KW-0862">Zinc</keyword>
<keyword id="KW-0863">Zinc-finger</keyword>
<organism>
    <name type="scientific">Homo sapiens</name>
    <name type="common">Human</name>
    <dbReference type="NCBI Taxonomy" id="9606"/>
    <lineage>
        <taxon>Eukaryota</taxon>
        <taxon>Metazoa</taxon>
        <taxon>Chordata</taxon>
        <taxon>Craniata</taxon>
        <taxon>Vertebrata</taxon>
        <taxon>Euteleostomi</taxon>
        <taxon>Mammalia</taxon>
        <taxon>Eutheria</taxon>
        <taxon>Euarchontoglires</taxon>
        <taxon>Primates</taxon>
        <taxon>Haplorrhini</taxon>
        <taxon>Catarrhini</taxon>
        <taxon>Hominidae</taxon>
        <taxon>Homo</taxon>
    </lineage>
</organism>
<feature type="chain" id="PRO_0000080986" description="Guanine nucleotide exchange factor VAV3">
    <location>
        <begin position="1"/>
        <end position="847"/>
    </location>
</feature>
<feature type="domain" description="Calponin-homology (CH)" evidence="2">
    <location>
        <begin position="1"/>
        <end position="119"/>
    </location>
</feature>
<feature type="domain" description="DH" evidence="3">
    <location>
        <begin position="192"/>
        <end position="371"/>
    </location>
</feature>
<feature type="domain" description="PH" evidence="4">
    <location>
        <begin position="400"/>
        <end position="502"/>
    </location>
</feature>
<feature type="domain" description="SH3 1" evidence="6">
    <location>
        <begin position="592"/>
        <end position="660"/>
    </location>
</feature>
<feature type="domain" description="SH2" evidence="5">
    <location>
        <begin position="672"/>
        <end position="766"/>
    </location>
</feature>
<feature type="domain" description="SH3 2" evidence="6">
    <location>
        <begin position="788"/>
        <end position="847"/>
    </location>
</feature>
<feature type="zinc finger region" description="Phorbol-ester/DAG-type" evidence="7">
    <location>
        <begin position="513"/>
        <end position="562"/>
    </location>
</feature>
<feature type="region of interest" description="Sufficient for interaction with ROS1" evidence="8">
    <location>
        <begin position="560"/>
        <end position="847"/>
    </location>
</feature>
<feature type="modified residue" description="Phosphotyrosine" evidence="18">
    <location>
        <position position="141"/>
    </location>
</feature>
<feature type="splice variant" id="VSP_041360" description="In isoform 3." evidence="14 16">
    <location>
        <begin position="1"/>
        <end position="560"/>
    </location>
</feature>
<feature type="splice variant" id="VSP_001820" description="In isoform 2." evidence="13">
    <original>MEPWKQCAQWLIHCKVLPTNHRVTWDSAQVFDLAQTLRDGVLLCQLLNNLRAHSINLKEINLRPQMSQFLCLKNIRTFLTACCETFGMRKSELFEAFDLFDVRDFGK</original>
    <variation>MQLPDCPCRAHLP</variation>
    <location>
        <begin position="1"/>
        <end position="107"/>
    </location>
</feature>
<feature type="splice variant" id="VSP_041361" description="In isoform 3." evidence="14 16">
    <original>NCGRVNSG</original>
    <variation>MPIFTFLS</variation>
    <location>
        <begin position="561"/>
        <end position="568"/>
    </location>
</feature>
<feature type="splice variant" id="VSP_042359" description="In isoform 4." evidence="15">
    <original>SL</original>
    <variation>SSPSLFCGFSFVTPPDYSFVPPSSTPFWSV</variation>
    <location>
        <begin position="783"/>
        <end position="784"/>
    </location>
</feature>
<feature type="sequence variant" id="VAR_061800" description="In dbSNP:rs34318889.">
    <original>D</original>
    <variation>N</variation>
    <location>
        <position position="139"/>
    </location>
</feature>
<feature type="sequence variant" id="VAR_033522" description="In dbSNP:rs7528153." evidence="10 12">
    <original>T</original>
    <variation>S</variation>
    <location>
        <position position="298"/>
    </location>
</feature>
<feature type="sequence variant" id="VAR_051998" description="In dbSNP:rs12410676.">
    <original>P</original>
    <variation>S</variation>
    <location>
        <position position="616"/>
    </location>
</feature>
<feature type="sequence variant" id="VAR_033523" description="In dbSNP:rs12403266.">
    <original>Q</original>
    <variation>H</variation>
    <location>
        <position position="618"/>
    </location>
</feature>
<feature type="sequence conflict" description="In Ref. 1; AAC79695." evidence="17" ref="1">
    <original>K</original>
    <variation>E</variation>
    <location>
        <position position="107"/>
    </location>
</feature>
<feature type="sequence conflict" description="In Ref. 2; AAD20348." evidence="17" ref="2">
    <original>Y</original>
    <variation>H</variation>
    <location>
        <position position="217"/>
    </location>
</feature>
<feature type="sequence conflict" description="In Ref. 2; AAD20348." evidence="17" ref="2">
    <original>V</original>
    <variation>A</variation>
    <location>
        <position position="429"/>
    </location>
</feature>
<feature type="helix" evidence="19">
    <location>
        <begin position="3"/>
        <end position="13"/>
    </location>
</feature>
<feature type="helix" evidence="19">
    <location>
        <begin position="30"/>
        <end position="38"/>
    </location>
</feature>
<feature type="helix" evidence="19">
    <location>
        <begin position="41"/>
        <end position="50"/>
    </location>
</feature>
<feature type="helix" evidence="19">
    <location>
        <begin position="57"/>
        <end position="59"/>
    </location>
</feature>
<feature type="helix" evidence="19">
    <location>
        <begin position="68"/>
        <end position="84"/>
    </location>
</feature>
<feature type="turn" evidence="19">
    <location>
        <begin position="90"/>
        <end position="92"/>
    </location>
</feature>
<feature type="helix" evidence="19">
    <location>
        <begin position="96"/>
        <end position="100"/>
    </location>
</feature>
<feature type="helix" evidence="19">
    <location>
        <begin position="106"/>
        <end position="115"/>
    </location>
</feature>
<feature type="helix" evidence="19">
    <location>
        <begin position="121"/>
        <end position="124"/>
    </location>
</feature>
<reference key="1">
    <citation type="journal article" date="1998" name="Nucleic Acids Res.">
        <title>Non-stoichiometric reduced complexity probes for cDNA arrays.</title>
        <authorList>
            <person name="Trenkle T."/>
            <person name="Welsh J."/>
            <person name="Jung B."/>
            <person name="Mathieu-Daude F."/>
            <person name="McClelland M."/>
        </authorList>
    </citation>
    <scope>NUCLEOTIDE SEQUENCE [MRNA] (ISOFORM 1)</scope>
    <scope>NUCLEOTIDE SEQUENCE [MRNA] OF 1-692 (ISOFORM 3)</scope>
    <scope>ALTERNATIVE PROMOTER USAGE</scope>
    <scope>TISSUE SPECIFICITY</scope>
    <scope>INDUCTION</scope>
    <scope>VARIANT SER-298</scope>
    <source>
        <tissue>Keratinocyte</tissue>
    </source>
</reference>
<reference key="2">
    <citation type="journal article" date="1999" name="Mol. Cell. Biol.">
        <title>Biological and regulatory properties of Vav-3, a new member of the Vav family of oncoproteins.</title>
        <authorList>
            <person name="Movilla N."/>
            <person name="Bustelo X.R."/>
        </authorList>
    </citation>
    <scope>NUCLEOTIDE SEQUENCE [MRNA] (ISOFORMS 1 AND 2)</scope>
    <scope>ALTERNATIVE SPLICING</scope>
</reference>
<reference key="3">
    <citation type="journal article" date="2004" name="Nat. Genet.">
        <title>Complete sequencing and characterization of 21,243 full-length human cDNAs.</title>
        <authorList>
            <person name="Ota T."/>
            <person name="Suzuki Y."/>
            <person name="Nishikawa T."/>
            <person name="Otsuki T."/>
            <person name="Sugiyama T."/>
            <person name="Irie R."/>
            <person name="Wakamatsu A."/>
            <person name="Hayashi K."/>
            <person name="Sato H."/>
            <person name="Nagai K."/>
            <person name="Kimura K."/>
            <person name="Makita H."/>
            <person name="Sekine M."/>
            <person name="Obayashi M."/>
            <person name="Nishi T."/>
            <person name="Shibahara T."/>
            <person name="Tanaka T."/>
            <person name="Ishii S."/>
            <person name="Yamamoto J."/>
            <person name="Saito K."/>
            <person name="Kawai Y."/>
            <person name="Isono Y."/>
            <person name="Nakamura Y."/>
            <person name="Nagahari K."/>
            <person name="Murakami K."/>
            <person name="Yasuda T."/>
            <person name="Iwayanagi T."/>
            <person name="Wagatsuma M."/>
            <person name="Shiratori A."/>
            <person name="Sudo H."/>
            <person name="Hosoiri T."/>
            <person name="Kaku Y."/>
            <person name="Kodaira H."/>
            <person name="Kondo H."/>
            <person name="Sugawara M."/>
            <person name="Takahashi M."/>
            <person name="Kanda K."/>
            <person name="Yokoi T."/>
            <person name="Furuya T."/>
            <person name="Kikkawa E."/>
            <person name="Omura Y."/>
            <person name="Abe K."/>
            <person name="Kamihara K."/>
            <person name="Katsuta N."/>
            <person name="Sato K."/>
            <person name="Tanikawa M."/>
            <person name="Yamazaki M."/>
            <person name="Ninomiya K."/>
            <person name="Ishibashi T."/>
            <person name="Yamashita H."/>
            <person name="Murakawa K."/>
            <person name="Fujimori K."/>
            <person name="Tanai H."/>
            <person name="Kimata M."/>
            <person name="Watanabe M."/>
            <person name="Hiraoka S."/>
            <person name="Chiba Y."/>
            <person name="Ishida S."/>
            <person name="Ono Y."/>
            <person name="Takiguchi S."/>
            <person name="Watanabe S."/>
            <person name="Yosida M."/>
            <person name="Hotuta T."/>
            <person name="Kusano J."/>
            <person name="Kanehori K."/>
            <person name="Takahashi-Fujii A."/>
            <person name="Hara H."/>
            <person name="Tanase T.-O."/>
            <person name="Nomura Y."/>
            <person name="Togiya S."/>
            <person name="Komai F."/>
            <person name="Hara R."/>
            <person name="Takeuchi K."/>
            <person name="Arita M."/>
            <person name="Imose N."/>
            <person name="Musashino K."/>
            <person name="Yuuki H."/>
            <person name="Oshima A."/>
            <person name="Sasaki N."/>
            <person name="Aotsuka S."/>
            <person name="Yoshikawa Y."/>
            <person name="Matsunawa H."/>
            <person name="Ichihara T."/>
            <person name="Shiohata N."/>
            <person name="Sano S."/>
            <person name="Moriya S."/>
            <person name="Momiyama H."/>
            <person name="Satoh N."/>
            <person name="Takami S."/>
            <person name="Terashima Y."/>
            <person name="Suzuki O."/>
            <person name="Nakagawa S."/>
            <person name="Senoh A."/>
            <person name="Mizoguchi H."/>
            <person name="Goto Y."/>
            <person name="Shimizu F."/>
            <person name="Wakebe H."/>
            <person name="Hishigaki H."/>
            <person name="Watanabe T."/>
            <person name="Sugiyama A."/>
            <person name="Takemoto M."/>
            <person name="Kawakami B."/>
            <person name="Yamazaki M."/>
            <person name="Watanabe K."/>
            <person name="Kumagai A."/>
            <person name="Itakura S."/>
            <person name="Fukuzumi Y."/>
            <person name="Fujimori Y."/>
            <person name="Komiyama M."/>
            <person name="Tashiro H."/>
            <person name="Tanigami A."/>
            <person name="Fujiwara T."/>
            <person name="Ono T."/>
            <person name="Yamada K."/>
            <person name="Fujii Y."/>
            <person name="Ozaki K."/>
            <person name="Hirao M."/>
            <person name="Ohmori Y."/>
            <person name="Kawabata A."/>
            <person name="Hikiji T."/>
            <person name="Kobatake N."/>
            <person name="Inagaki H."/>
            <person name="Ikema Y."/>
            <person name="Okamoto S."/>
            <person name="Okitani R."/>
            <person name="Kawakami T."/>
            <person name="Noguchi S."/>
            <person name="Itoh T."/>
            <person name="Shigeta K."/>
            <person name="Senba T."/>
            <person name="Matsumura K."/>
            <person name="Nakajima Y."/>
            <person name="Mizuno T."/>
            <person name="Morinaga M."/>
            <person name="Sasaki M."/>
            <person name="Togashi T."/>
            <person name="Oyama M."/>
            <person name="Hata H."/>
            <person name="Watanabe M."/>
            <person name="Komatsu T."/>
            <person name="Mizushima-Sugano J."/>
            <person name="Satoh T."/>
            <person name="Shirai Y."/>
            <person name="Takahashi Y."/>
            <person name="Nakagawa K."/>
            <person name="Okumura K."/>
            <person name="Nagase T."/>
            <person name="Nomura N."/>
            <person name="Kikuchi H."/>
            <person name="Masuho Y."/>
            <person name="Yamashita R."/>
            <person name="Nakai K."/>
            <person name="Yada T."/>
            <person name="Nakamura Y."/>
            <person name="Ohara O."/>
            <person name="Isogai T."/>
            <person name="Sugano S."/>
        </authorList>
    </citation>
    <scope>NUCLEOTIDE SEQUENCE [LARGE SCALE MRNA] (ISOFORM 3)</scope>
    <source>
        <tissue>Trachea</tissue>
    </source>
</reference>
<reference key="4">
    <citation type="journal article" date="2006" name="Nature">
        <title>The DNA sequence and biological annotation of human chromosome 1.</title>
        <authorList>
            <person name="Gregory S.G."/>
            <person name="Barlow K.F."/>
            <person name="McLay K.E."/>
            <person name="Kaul R."/>
            <person name="Swarbreck D."/>
            <person name="Dunham A."/>
            <person name="Scott C.E."/>
            <person name="Howe K.L."/>
            <person name="Woodfine K."/>
            <person name="Spencer C.C.A."/>
            <person name="Jones M.C."/>
            <person name="Gillson C."/>
            <person name="Searle S."/>
            <person name="Zhou Y."/>
            <person name="Kokocinski F."/>
            <person name="McDonald L."/>
            <person name="Evans R."/>
            <person name="Phillips K."/>
            <person name="Atkinson A."/>
            <person name="Cooper R."/>
            <person name="Jones C."/>
            <person name="Hall R.E."/>
            <person name="Andrews T.D."/>
            <person name="Lloyd C."/>
            <person name="Ainscough R."/>
            <person name="Almeida J.P."/>
            <person name="Ambrose K.D."/>
            <person name="Anderson F."/>
            <person name="Andrew R.W."/>
            <person name="Ashwell R.I.S."/>
            <person name="Aubin K."/>
            <person name="Babbage A.K."/>
            <person name="Bagguley C.L."/>
            <person name="Bailey J."/>
            <person name="Beasley H."/>
            <person name="Bethel G."/>
            <person name="Bird C.P."/>
            <person name="Bray-Allen S."/>
            <person name="Brown J.Y."/>
            <person name="Brown A.J."/>
            <person name="Buckley D."/>
            <person name="Burton J."/>
            <person name="Bye J."/>
            <person name="Carder C."/>
            <person name="Chapman J.C."/>
            <person name="Clark S.Y."/>
            <person name="Clarke G."/>
            <person name="Clee C."/>
            <person name="Cobley V."/>
            <person name="Collier R.E."/>
            <person name="Corby N."/>
            <person name="Coville G.J."/>
            <person name="Davies J."/>
            <person name="Deadman R."/>
            <person name="Dunn M."/>
            <person name="Earthrowl M."/>
            <person name="Ellington A.G."/>
            <person name="Errington H."/>
            <person name="Frankish A."/>
            <person name="Frankland J."/>
            <person name="French L."/>
            <person name="Garner P."/>
            <person name="Garnett J."/>
            <person name="Gay L."/>
            <person name="Ghori M.R.J."/>
            <person name="Gibson R."/>
            <person name="Gilby L.M."/>
            <person name="Gillett W."/>
            <person name="Glithero R.J."/>
            <person name="Grafham D.V."/>
            <person name="Griffiths C."/>
            <person name="Griffiths-Jones S."/>
            <person name="Grocock R."/>
            <person name="Hammond S."/>
            <person name="Harrison E.S.I."/>
            <person name="Hart E."/>
            <person name="Haugen E."/>
            <person name="Heath P.D."/>
            <person name="Holmes S."/>
            <person name="Holt K."/>
            <person name="Howden P.J."/>
            <person name="Hunt A.R."/>
            <person name="Hunt S.E."/>
            <person name="Hunter G."/>
            <person name="Isherwood J."/>
            <person name="James R."/>
            <person name="Johnson C."/>
            <person name="Johnson D."/>
            <person name="Joy A."/>
            <person name="Kay M."/>
            <person name="Kershaw J.K."/>
            <person name="Kibukawa M."/>
            <person name="Kimberley A.M."/>
            <person name="King A."/>
            <person name="Knights A.J."/>
            <person name="Lad H."/>
            <person name="Laird G."/>
            <person name="Lawlor S."/>
            <person name="Leongamornlert D.A."/>
            <person name="Lloyd D.M."/>
            <person name="Loveland J."/>
            <person name="Lovell J."/>
            <person name="Lush M.J."/>
            <person name="Lyne R."/>
            <person name="Martin S."/>
            <person name="Mashreghi-Mohammadi M."/>
            <person name="Matthews L."/>
            <person name="Matthews N.S.W."/>
            <person name="McLaren S."/>
            <person name="Milne S."/>
            <person name="Mistry S."/>
            <person name="Moore M.J.F."/>
            <person name="Nickerson T."/>
            <person name="O'Dell C.N."/>
            <person name="Oliver K."/>
            <person name="Palmeiri A."/>
            <person name="Palmer S.A."/>
            <person name="Parker A."/>
            <person name="Patel D."/>
            <person name="Pearce A.V."/>
            <person name="Peck A.I."/>
            <person name="Pelan S."/>
            <person name="Phelps K."/>
            <person name="Phillimore B.J."/>
            <person name="Plumb R."/>
            <person name="Rajan J."/>
            <person name="Raymond C."/>
            <person name="Rouse G."/>
            <person name="Saenphimmachak C."/>
            <person name="Sehra H.K."/>
            <person name="Sheridan E."/>
            <person name="Shownkeen R."/>
            <person name="Sims S."/>
            <person name="Skuce C.D."/>
            <person name="Smith M."/>
            <person name="Steward C."/>
            <person name="Subramanian S."/>
            <person name="Sycamore N."/>
            <person name="Tracey A."/>
            <person name="Tromans A."/>
            <person name="Van Helmond Z."/>
            <person name="Wall M."/>
            <person name="Wallis J.M."/>
            <person name="White S."/>
            <person name="Whitehead S.L."/>
            <person name="Wilkinson J.E."/>
            <person name="Willey D.L."/>
            <person name="Williams H."/>
            <person name="Wilming L."/>
            <person name="Wray P.W."/>
            <person name="Wu Z."/>
            <person name="Coulson A."/>
            <person name="Vaudin M."/>
            <person name="Sulston J.E."/>
            <person name="Durbin R.M."/>
            <person name="Hubbard T."/>
            <person name="Wooster R."/>
            <person name="Dunham I."/>
            <person name="Carter N.P."/>
            <person name="McVean G."/>
            <person name="Ross M.T."/>
            <person name="Harrow J."/>
            <person name="Olson M.V."/>
            <person name="Beck S."/>
            <person name="Rogers J."/>
            <person name="Bentley D.R."/>
        </authorList>
    </citation>
    <scope>NUCLEOTIDE SEQUENCE [LARGE SCALE GENOMIC DNA]</scope>
</reference>
<reference key="5">
    <citation type="submission" date="2005-07" db="EMBL/GenBank/DDBJ databases">
        <authorList>
            <person name="Mural R.J."/>
            <person name="Istrail S."/>
            <person name="Sutton G.G."/>
            <person name="Florea L."/>
            <person name="Halpern A.L."/>
            <person name="Mobarry C.M."/>
            <person name="Lippert R."/>
            <person name="Walenz B."/>
            <person name="Shatkay H."/>
            <person name="Dew I."/>
            <person name="Miller J.R."/>
            <person name="Flanigan M.J."/>
            <person name="Edwards N.J."/>
            <person name="Bolanos R."/>
            <person name="Fasulo D."/>
            <person name="Halldorsson B.V."/>
            <person name="Hannenhalli S."/>
            <person name="Turner R."/>
            <person name="Yooseph S."/>
            <person name="Lu F."/>
            <person name="Nusskern D.R."/>
            <person name="Shue B.C."/>
            <person name="Zheng X.H."/>
            <person name="Zhong F."/>
            <person name="Delcher A.L."/>
            <person name="Huson D.H."/>
            <person name="Kravitz S.A."/>
            <person name="Mouchard L."/>
            <person name="Reinert K."/>
            <person name="Remington K.A."/>
            <person name="Clark A.G."/>
            <person name="Waterman M.S."/>
            <person name="Eichler E.E."/>
            <person name="Adams M.D."/>
            <person name="Hunkapiller M.W."/>
            <person name="Myers E.W."/>
            <person name="Venter J.C."/>
        </authorList>
    </citation>
    <scope>NUCLEOTIDE SEQUENCE [LARGE SCALE GENOMIC DNA]</scope>
</reference>
<reference key="6">
    <citation type="journal article" date="2004" name="Genome Res.">
        <title>The status, quality, and expansion of the NIH full-length cDNA project: the Mammalian Gene Collection (MGC).</title>
        <authorList>
            <consortium name="The MGC Project Team"/>
        </authorList>
    </citation>
    <scope>NUCLEOTIDE SEQUENCE [LARGE SCALE MRNA] (ISOFORM 4)</scope>
    <scope>VARIANT SER-298</scope>
</reference>
<reference key="7">
    <citation type="journal article" date="2000" name="Mol. Cell. Biol.">
        <title>Vav3 mediates receptor protein tyrosine kinase signaling, regulates GTPase activity, modulates cell morphology, and induces cell transformation.</title>
        <authorList>
            <person name="Zeng L."/>
            <person name="Sachdev P."/>
            <person name="Yan L."/>
            <person name="Chan J.L."/>
            <person name="Trenkle T."/>
            <person name="McClelland M."/>
            <person name="Welsh J."/>
            <person name="Wang L.H."/>
        </authorList>
    </citation>
    <scope>INTERACTION WITH ROS1</scope>
    <scope>PHOSPHORYLATION</scope>
    <scope>TISSUE SPECIFICITY</scope>
</reference>
<reference key="8">
    <citation type="journal article" date="2002" name="Oncogene">
        <title>Adaptor protein APS binds the NH2-terminal autoinhibitory domain of guanine nucleotide exchange factor Vav3 and augments its activity.</title>
        <authorList>
            <person name="Yabana N."/>
            <person name="Shibuya M."/>
        </authorList>
    </citation>
    <scope>INTERACTION WITH SH2B2</scope>
</reference>
<reference key="9">
    <citation type="journal article" date="2006" name="Mol. Cell. Biol.">
        <title>Essential role of Vav family guanine nucleotide exchange factors in EphA receptor-mediated angiogenesis.</title>
        <authorList>
            <person name="Hunter S.G."/>
            <person name="Zhuang G."/>
            <person name="Brantley-Sieders D.M."/>
            <person name="Swat W."/>
            <person name="Cowan C.W."/>
            <person name="Chen J."/>
        </authorList>
    </citation>
    <scope>INTERACTION WITH EPHA2</scope>
</reference>
<reference key="10">
    <citation type="journal article" date="2009" name="Sci. Signal.">
        <title>Quantitative phosphoproteomic analysis of T cell receptor signaling reveals system-wide modulation of protein-protein interactions.</title>
        <authorList>
            <person name="Mayya V."/>
            <person name="Lundgren D.H."/>
            <person name="Hwang S.-I."/>
            <person name="Rezaul K."/>
            <person name="Wu L."/>
            <person name="Eng J.K."/>
            <person name="Rodionov V."/>
            <person name="Han D.K."/>
        </authorList>
    </citation>
    <scope>PHOSPHORYLATION [LARGE SCALE ANALYSIS] AT TYR-141</scope>
    <scope>IDENTIFICATION BY MASS SPECTROMETRY [LARGE SCALE ANALYSIS]</scope>
    <source>
        <tissue>Leukemic T-cell</tissue>
    </source>
</reference>
<reference key="11">
    <citation type="submission" date="2006-12" db="PDB data bank">
        <title>Solution structure of the CH domain from human VAV-3 protein.</title>
        <authorList>
            <consortium name="RIKEN structural genomics initiative (RSGI)"/>
        </authorList>
    </citation>
    <scope>STRUCTURE BY NMR OF 1-134</scope>
</reference>
<proteinExistence type="evidence at protein level"/>
<protein>
    <recommendedName>
        <fullName>Guanine nucleotide exchange factor VAV3</fullName>
        <shortName>VAV-3</shortName>
    </recommendedName>
</protein>
<accession>Q9UKW4</accession>
<accession>B1AMM0</accession>
<accession>B1APV5</accession>
<accession>B4E232</accession>
<accession>B7ZLR1</accession>
<accession>E9PQ97</accession>
<accession>O60498</accession>
<accession>O95230</accession>
<accession>Q9Y5X8</accession>
<name>VAV3_HUMAN</name>
<comment type="function">
    <text evidence="1">Exchange factor for GTP-binding proteins RhoA, RhoG and, to a lesser extent, Rac1. Binds physically to the nucleotide-free states of those GTPases. Plays an important role in angiogenesis. Its recruitment by phosphorylated EPHA2 is critical for EFNA1-induced RAC1 GTPase activation and vascular endothelial cell migration and assembly (By similarity). May be important for integrin-mediated signaling, at least in some cell types. In osteoclasts, along with SYK tyrosine kinase, required for signaling through integrin alpha-v/beta-1 (ITAGV-ITGB1), a crucial event for osteoclast proper cytoskeleton organization and function. This signaling pathway involves RAC1, but not RHO, activation. Necessary for proper wound healing. In the course of wound healing, required for the phagocytotic cup formation preceding macrophage phagocytosis of apoptotic neutrophils. Responsible for integrin beta-2 (ITGB2)-mediated macrophage adhesion and, to a lesser extent, contributes to beta-3 (ITGB3)-mediated adhesion. Does not affect integrin beta-1 (ITGB1)-mediated adhesion (By similarity).</text>
</comment>
<comment type="subunit">
    <text evidence="8 9 11">Interacts with the PH domain of SH2B2. Interacts (via SH2 domains) with the phosphorylated form of EPHA2. Interacts with ROS1; constitutive interaction that mediates VAV3 phosphorylation.</text>
</comment>
<comment type="interaction">
    <interactant intactId="EBI-297568">
        <id>Q9UKW4</id>
    </interactant>
    <interactant intactId="EBI-744027">
        <id>Q13191</id>
        <label>CBLB</label>
    </interactant>
    <organismsDiffer>false</organismsDiffer>
    <experiments>3</experiments>
</comment>
<comment type="interaction">
    <interactant intactId="EBI-297568">
        <id>Q9UKW4</id>
    </interactant>
    <interactant intactId="EBI-517684">
        <id>Q13480</id>
        <label>GAB1</label>
    </interactant>
    <organismsDiffer>false</organismsDiffer>
    <experiments>6</experiments>
</comment>
<comment type="interaction">
    <interactant intactId="EBI-297568">
        <id>Q9UKW4</id>
    </interactant>
    <interactant intactId="EBI-401755">
        <id>P62993</id>
        <label>GRB2</label>
    </interactant>
    <organismsDiffer>false</organismsDiffer>
    <experiments>8</experiments>
</comment>
<comment type="interaction">
    <interactant intactId="EBI-297568">
        <id>Q9UKW4</id>
    </interactant>
    <interactant intactId="EBI-1039152">
        <id>P08581</id>
        <label>MET</label>
    </interactant>
    <organismsDiffer>false</organismsDiffer>
    <experiments>2</experiments>
</comment>
<comment type="interaction">
    <interactant intactId="EBI-297568">
        <id>Q9UKW4</id>
    </interactant>
    <interactant intactId="EBI-79464">
        <id>P27986</id>
        <label>PIK3R1</label>
    </interactant>
    <organismsDiffer>false</organismsDiffer>
    <experiments>2</experiments>
</comment>
<comment type="interaction">
    <interactant intactId="EBI-297568">
        <id>Q9UKW4</id>
    </interactant>
    <interactant intactId="EBI-726876">
        <id>Q6NUQ1</id>
        <label>RINT1</label>
    </interactant>
    <organismsDiffer>false</organismsDiffer>
    <experiments>3</experiments>
</comment>
<comment type="interaction">
    <interactant intactId="EBI-297568">
        <id>Q9UKW4</id>
    </interactant>
    <interactant intactId="EBI-527853">
        <id>Q9UGI0</id>
        <label>ZRANB1</label>
    </interactant>
    <organismsDiffer>false</organismsDiffer>
    <experiments>3</experiments>
</comment>
<comment type="alternative products">
    <event type="alternative promoter"/>
    <event type="alternative splicing"/>
    <isoform>
        <id>Q9UKW4-1</id>
        <name>1</name>
        <name>Alpha</name>
        <sequence type="displayed"/>
    </isoform>
    <isoform>
        <id>Q9UKW4-2</id>
        <name>2</name>
        <name>Beta</name>
        <sequence type="described" ref="VSP_001820"/>
    </isoform>
    <isoform>
        <id>Q9UKW4-3</id>
        <name>3</name>
        <name>VAV3.1</name>
        <sequence type="described" ref="VSP_041360 VSP_041361"/>
    </isoform>
    <isoform>
        <id>Q9UKW4-4</id>
        <name>4</name>
        <sequence type="described" ref="VSP_042359"/>
    </isoform>
</comment>
<comment type="tissue specificity">
    <text evidence="8 12">Isoform 1 and isoform 3 are widely expressed; both are expressed at very low levels in skeletal muscle. In keratinocytes, isoform 1 is less abundant than isoform 3. Isoform 3 is detected at very low levels, if any, in adrenal gland, bone marrow, spleen, fetal brain and spinal cord; in these tissues, isoform 1 is readily detectable.</text>
</comment>
<comment type="induction">
    <text evidence="12">Down-regulated by EGF and TGF-beta.</text>
</comment>
<comment type="PTM">
    <text evidence="1">Phosphorylated. Phosphorylation can be mediated by ROS1. In osteoclasts, undergoes tyrosine phosphorylation in response to CSF1 (By similarity).</text>
</comment>
<comment type="miscellaneous">
    <molecule>Isoform 3</molecule>
    <text evidence="17">May be produced by alternative promoter usage.</text>
</comment>
<comment type="sequence caution" evidence="17">
    <conflict type="erroneous initiation">
        <sequence resource="EMBL-CDS" id="AAD03799"/>
    </conflict>
    <text>Extended N-terminus.</text>
</comment>
<comment type="online information" name="Atlas of Genetics and Cytogenetics in Oncology and Haematology">
    <link uri="https://atlasgeneticsoncology.org/gene/42782/VAV3"/>
</comment>
<evidence type="ECO:0000250" key="1"/>
<evidence type="ECO:0000255" key="2">
    <source>
        <dbReference type="PROSITE-ProRule" id="PRU00044"/>
    </source>
</evidence>
<evidence type="ECO:0000255" key="3">
    <source>
        <dbReference type="PROSITE-ProRule" id="PRU00062"/>
    </source>
</evidence>
<evidence type="ECO:0000255" key="4">
    <source>
        <dbReference type="PROSITE-ProRule" id="PRU00145"/>
    </source>
</evidence>
<evidence type="ECO:0000255" key="5">
    <source>
        <dbReference type="PROSITE-ProRule" id="PRU00191"/>
    </source>
</evidence>
<evidence type="ECO:0000255" key="6">
    <source>
        <dbReference type="PROSITE-ProRule" id="PRU00192"/>
    </source>
</evidence>
<evidence type="ECO:0000255" key="7">
    <source>
        <dbReference type="PROSITE-ProRule" id="PRU00226"/>
    </source>
</evidence>
<evidence type="ECO:0000269" key="8">
    <source>
    </source>
</evidence>
<evidence type="ECO:0000269" key="9">
    <source>
    </source>
</evidence>
<evidence type="ECO:0000269" key="10">
    <source>
    </source>
</evidence>
<evidence type="ECO:0000269" key="11">
    <source>
    </source>
</evidence>
<evidence type="ECO:0000269" key="12">
    <source>
    </source>
</evidence>
<evidence type="ECO:0000303" key="13">
    <source>
    </source>
</evidence>
<evidence type="ECO:0000303" key="14">
    <source>
    </source>
</evidence>
<evidence type="ECO:0000303" key="15">
    <source>
    </source>
</evidence>
<evidence type="ECO:0000303" key="16">
    <source>
    </source>
</evidence>
<evidence type="ECO:0000305" key="17"/>
<evidence type="ECO:0007744" key="18">
    <source>
    </source>
</evidence>
<evidence type="ECO:0007829" key="19">
    <source>
        <dbReference type="PDB" id="2D86"/>
    </source>
</evidence>
<gene>
    <name type="primary">VAV3</name>
</gene>
<dbReference type="EMBL" id="AF035442">
    <property type="protein sequence ID" value="AAD03799.1"/>
    <property type="status" value="ALT_INIT"/>
    <property type="molecule type" value="mRNA"/>
</dbReference>
<dbReference type="EMBL" id="AF067817">
    <property type="protein sequence ID" value="AAC79695.1"/>
    <property type="molecule type" value="mRNA"/>
</dbReference>
<dbReference type="EMBL" id="AF118887">
    <property type="protein sequence ID" value="AAD20349.1"/>
    <property type="molecule type" value="mRNA"/>
</dbReference>
<dbReference type="EMBL" id="AF118886">
    <property type="protein sequence ID" value="AAD20348.1"/>
    <property type="molecule type" value="mRNA"/>
</dbReference>
<dbReference type="EMBL" id="AK304088">
    <property type="protein sequence ID" value="BAG64994.1"/>
    <property type="molecule type" value="mRNA"/>
</dbReference>
<dbReference type="EMBL" id="AK316295">
    <property type="protein sequence ID" value="BAH14666.1"/>
    <property type="molecule type" value="mRNA"/>
</dbReference>
<dbReference type="EMBL" id="AC114491">
    <property type="status" value="NOT_ANNOTATED_CDS"/>
    <property type="molecule type" value="Genomic_DNA"/>
</dbReference>
<dbReference type="EMBL" id="AL353892">
    <property type="status" value="NOT_ANNOTATED_CDS"/>
    <property type="molecule type" value="Genomic_DNA"/>
</dbReference>
<dbReference type="EMBL" id="AL391235">
    <property type="status" value="NOT_ANNOTATED_CDS"/>
    <property type="molecule type" value="Genomic_DNA"/>
</dbReference>
<dbReference type="EMBL" id="AL513206">
    <property type="status" value="NOT_ANNOTATED_CDS"/>
    <property type="molecule type" value="Genomic_DNA"/>
</dbReference>
<dbReference type="EMBL" id="AL591042">
    <property type="status" value="NOT_ANNOTATED_CDS"/>
    <property type="molecule type" value="Genomic_DNA"/>
</dbReference>
<dbReference type="EMBL" id="CH471156">
    <property type="protein sequence ID" value="EAW51252.1"/>
    <property type="molecule type" value="Genomic_DNA"/>
</dbReference>
<dbReference type="EMBL" id="BC143969">
    <property type="protein sequence ID" value="AAI43970.1"/>
    <property type="molecule type" value="mRNA"/>
</dbReference>
<dbReference type="CCDS" id="CCDS44181.1">
    <molecule id="Q9UKW4-3"/>
</dbReference>
<dbReference type="CCDS" id="CCDS785.1">
    <molecule id="Q9UKW4-1"/>
</dbReference>
<dbReference type="RefSeq" id="NP_001073343.1">
    <molecule id="Q9UKW4-3"/>
    <property type="nucleotide sequence ID" value="NM_001079874.2"/>
</dbReference>
<dbReference type="RefSeq" id="NP_006104.4">
    <molecule id="Q9UKW4-1"/>
    <property type="nucleotide sequence ID" value="NM_006113.4"/>
</dbReference>
<dbReference type="RefSeq" id="XP_005270417.1">
    <molecule id="Q9UKW4-2"/>
    <property type="nucleotide sequence ID" value="XM_005270360.3"/>
</dbReference>
<dbReference type="PDB" id="2D86">
    <property type="method" value="NMR"/>
    <property type="chains" value="A=1-130"/>
</dbReference>
<dbReference type="PDBsum" id="2D86"/>
<dbReference type="BMRB" id="Q9UKW4"/>
<dbReference type="SMR" id="Q9UKW4"/>
<dbReference type="BioGRID" id="115715">
    <property type="interactions" value="48"/>
</dbReference>
<dbReference type="CORUM" id="Q9UKW4"/>
<dbReference type="FunCoup" id="Q9UKW4">
    <property type="interactions" value="2201"/>
</dbReference>
<dbReference type="IntAct" id="Q9UKW4">
    <property type="interactions" value="23"/>
</dbReference>
<dbReference type="MINT" id="Q9UKW4"/>
<dbReference type="STRING" id="9606.ENSP00000359073"/>
<dbReference type="GlyGen" id="Q9UKW4">
    <property type="glycosylation" value="1 site, 2 N-linked glycans (1 site)"/>
</dbReference>
<dbReference type="iPTMnet" id="Q9UKW4"/>
<dbReference type="PhosphoSitePlus" id="Q9UKW4"/>
<dbReference type="BioMuta" id="VAV3"/>
<dbReference type="DMDM" id="12643372"/>
<dbReference type="jPOST" id="Q9UKW4"/>
<dbReference type="MassIVE" id="Q9UKW4"/>
<dbReference type="PaxDb" id="9606-ENSP00000359073"/>
<dbReference type="PeptideAtlas" id="Q9UKW4"/>
<dbReference type="ProteomicsDB" id="84896">
    <molecule id="Q9UKW4-1"/>
</dbReference>
<dbReference type="ProteomicsDB" id="84897">
    <molecule id="Q9UKW4-2"/>
</dbReference>
<dbReference type="ProteomicsDB" id="84898">
    <molecule id="Q9UKW4-3"/>
</dbReference>
<dbReference type="ProteomicsDB" id="84899">
    <molecule id="Q9UKW4-4"/>
</dbReference>
<dbReference type="Pumba" id="Q9UKW4"/>
<dbReference type="ABCD" id="Q9UKW4">
    <property type="antibodies" value="2 sequenced antibodies"/>
</dbReference>
<dbReference type="Antibodypedia" id="4549">
    <property type="antibodies" value="343 antibodies from 36 providers"/>
</dbReference>
<dbReference type="DNASU" id="10451"/>
<dbReference type="Ensembl" id="ENST00000370056.9">
    <molecule id="Q9UKW4-1"/>
    <property type="protein sequence ID" value="ENSP00000359073.4"/>
    <property type="gene ID" value="ENSG00000134215.16"/>
</dbReference>
<dbReference type="Ensembl" id="ENST00000415432.6">
    <molecule id="Q9UKW4-3"/>
    <property type="protein sequence ID" value="ENSP00000394897.2"/>
    <property type="gene ID" value="ENSG00000134215.16"/>
</dbReference>
<dbReference type="Ensembl" id="ENST00000527011.5">
    <molecule id="Q9UKW4-4"/>
    <property type="protein sequence ID" value="ENSP00000432540.1"/>
    <property type="gene ID" value="ENSG00000134215.16"/>
</dbReference>
<dbReference type="GeneID" id="10451"/>
<dbReference type="KEGG" id="hsa:10451"/>
<dbReference type="MANE-Select" id="ENST00000370056.9">
    <property type="protein sequence ID" value="ENSP00000359073.4"/>
    <property type="RefSeq nucleotide sequence ID" value="NM_006113.5"/>
    <property type="RefSeq protein sequence ID" value="NP_006104.4"/>
</dbReference>
<dbReference type="UCSC" id="uc001dvj.2">
    <molecule id="Q9UKW4-1"/>
    <property type="organism name" value="human"/>
</dbReference>
<dbReference type="AGR" id="HGNC:12659"/>
<dbReference type="CTD" id="10451"/>
<dbReference type="DisGeNET" id="10451"/>
<dbReference type="GeneCards" id="VAV3"/>
<dbReference type="HGNC" id="HGNC:12659">
    <property type="gene designation" value="VAV3"/>
</dbReference>
<dbReference type="HPA" id="ENSG00000134215">
    <property type="expression patterns" value="Tissue enhanced (kidney)"/>
</dbReference>
<dbReference type="MIM" id="605541">
    <property type="type" value="gene"/>
</dbReference>
<dbReference type="neXtProt" id="NX_Q9UKW4"/>
<dbReference type="OpenTargets" id="ENSG00000134215"/>
<dbReference type="PharmGKB" id="PA37282"/>
<dbReference type="VEuPathDB" id="HostDB:ENSG00000134215"/>
<dbReference type="eggNOG" id="KOG2996">
    <property type="taxonomic scope" value="Eukaryota"/>
</dbReference>
<dbReference type="GeneTree" id="ENSGT00940000155252"/>
<dbReference type="HOGENOM" id="CLU_013787_0_0_1"/>
<dbReference type="InParanoid" id="Q9UKW4"/>
<dbReference type="OMA" id="MAISCLD"/>
<dbReference type="OrthoDB" id="5340910at2759"/>
<dbReference type="PAN-GO" id="Q9UKW4">
    <property type="GO annotations" value="5 GO annotations based on evolutionary models"/>
</dbReference>
<dbReference type="PhylomeDB" id="Q9UKW4"/>
<dbReference type="TreeFam" id="TF316171"/>
<dbReference type="PathwayCommons" id="Q9UKW4"/>
<dbReference type="Reactome" id="R-HSA-114604">
    <property type="pathway name" value="GPVI-mediated activation cascade"/>
</dbReference>
<dbReference type="Reactome" id="R-HSA-193648">
    <property type="pathway name" value="NRAGE signals death through JNK"/>
</dbReference>
<dbReference type="Reactome" id="R-HSA-2029482">
    <property type="pathway name" value="Regulation of actin dynamics for phagocytic cup formation"/>
</dbReference>
<dbReference type="Reactome" id="R-HSA-2424491">
    <property type="pathway name" value="DAP12 signaling"/>
</dbReference>
<dbReference type="Reactome" id="R-HSA-2871796">
    <property type="pathway name" value="FCERI mediated MAPK activation"/>
</dbReference>
<dbReference type="Reactome" id="R-HSA-2871809">
    <property type="pathway name" value="FCERI mediated Ca+2 mobilization"/>
</dbReference>
<dbReference type="Reactome" id="R-HSA-3928665">
    <property type="pathway name" value="EPH-ephrin mediated repulsion of cells"/>
</dbReference>
<dbReference type="Reactome" id="R-HSA-416482">
    <property type="pathway name" value="G alpha (12/13) signalling events"/>
</dbReference>
<dbReference type="Reactome" id="R-HSA-4420097">
    <property type="pathway name" value="VEGFA-VEGFR2 Pathway"/>
</dbReference>
<dbReference type="Reactome" id="R-HSA-5218920">
    <property type="pathway name" value="VEGFR2 mediated vascular permeability"/>
</dbReference>
<dbReference type="Reactome" id="R-HSA-8980692">
    <property type="pathway name" value="RHOA GTPase cycle"/>
</dbReference>
<dbReference type="Reactome" id="R-HSA-9013148">
    <property type="pathway name" value="CDC42 GTPase cycle"/>
</dbReference>
<dbReference type="Reactome" id="R-HSA-9013149">
    <property type="pathway name" value="RAC1 GTPase cycle"/>
</dbReference>
<dbReference type="Reactome" id="R-HSA-9013404">
    <property type="pathway name" value="RAC2 GTPase cycle"/>
</dbReference>
<dbReference type="Reactome" id="R-HSA-9013408">
    <property type="pathway name" value="RHOG GTPase cycle"/>
</dbReference>
<dbReference type="Reactome" id="R-HSA-9664422">
    <property type="pathway name" value="FCGR3A-mediated phagocytosis"/>
</dbReference>
<dbReference type="Reactome" id="R-HSA-9748787">
    <property type="pathway name" value="Azathioprine ADME"/>
</dbReference>
<dbReference type="SignaLink" id="Q9UKW4"/>
<dbReference type="SIGNOR" id="Q9UKW4"/>
<dbReference type="BioGRID-ORCS" id="10451">
    <property type="hits" value="17 hits in 1157 CRISPR screens"/>
</dbReference>
<dbReference type="ChiTaRS" id="VAV3">
    <property type="organism name" value="human"/>
</dbReference>
<dbReference type="EvolutionaryTrace" id="Q9UKW4"/>
<dbReference type="GeneWiki" id="VAV3"/>
<dbReference type="GenomeRNAi" id="10451"/>
<dbReference type="Pharos" id="Q9UKW4">
    <property type="development level" value="Tbio"/>
</dbReference>
<dbReference type="PRO" id="PR:Q9UKW4"/>
<dbReference type="Proteomes" id="UP000005640">
    <property type="component" value="Chromosome 1"/>
</dbReference>
<dbReference type="RNAct" id="Q9UKW4">
    <property type="molecule type" value="protein"/>
</dbReference>
<dbReference type="Bgee" id="ENSG00000134215">
    <property type="expression patterns" value="Expressed in tongue squamous epithelium and 172 other cell types or tissues"/>
</dbReference>
<dbReference type="ExpressionAtlas" id="Q9UKW4">
    <property type="expression patterns" value="baseline and differential"/>
</dbReference>
<dbReference type="GO" id="GO:0005737">
    <property type="term" value="C:cytoplasm"/>
    <property type="evidence" value="ECO:0000318"/>
    <property type="project" value="GO_Central"/>
</dbReference>
<dbReference type="GO" id="GO:0005829">
    <property type="term" value="C:cytosol"/>
    <property type="evidence" value="ECO:0000304"/>
    <property type="project" value="Reactome"/>
</dbReference>
<dbReference type="GO" id="GO:0001772">
    <property type="term" value="C:immunological synapse"/>
    <property type="evidence" value="ECO:0000314"/>
    <property type="project" value="CACAO"/>
</dbReference>
<dbReference type="GO" id="GO:0005886">
    <property type="term" value="C:plasma membrane"/>
    <property type="evidence" value="ECO:0000318"/>
    <property type="project" value="GO_Central"/>
</dbReference>
<dbReference type="GO" id="GO:0005154">
    <property type="term" value="F:epidermal growth factor receptor binding"/>
    <property type="evidence" value="ECO:0007669"/>
    <property type="project" value="Ensembl"/>
</dbReference>
<dbReference type="GO" id="GO:0005096">
    <property type="term" value="F:GTPase activator activity"/>
    <property type="evidence" value="ECO:0000304"/>
    <property type="project" value="ProtInc"/>
</dbReference>
<dbReference type="GO" id="GO:0005085">
    <property type="term" value="F:guanyl-nucleotide exchange factor activity"/>
    <property type="evidence" value="ECO:0000269"/>
    <property type="project" value="Reactome"/>
</dbReference>
<dbReference type="GO" id="GO:0008270">
    <property type="term" value="F:zinc ion binding"/>
    <property type="evidence" value="ECO:0007669"/>
    <property type="project" value="UniProtKB-KW"/>
</dbReference>
<dbReference type="GO" id="GO:0001525">
    <property type="term" value="P:angiogenesis"/>
    <property type="evidence" value="ECO:0007669"/>
    <property type="project" value="UniProtKB-KW"/>
</dbReference>
<dbReference type="GO" id="GO:0050853">
    <property type="term" value="P:B cell receptor signaling pathway"/>
    <property type="evidence" value="ECO:0000315"/>
    <property type="project" value="UniProtKB"/>
</dbReference>
<dbReference type="GO" id="GO:0016477">
    <property type="term" value="P:cell migration"/>
    <property type="evidence" value="ECO:0000318"/>
    <property type="project" value="GO_Central"/>
</dbReference>
<dbReference type="GO" id="GO:0006974">
    <property type="term" value="P:DNA damage response"/>
    <property type="evidence" value="ECO:0000315"/>
    <property type="project" value="UniProtKB"/>
</dbReference>
<dbReference type="GO" id="GO:0038095">
    <property type="term" value="P:Fc-epsilon receptor signaling pathway"/>
    <property type="evidence" value="ECO:0000304"/>
    <property type="project" value="Reactome"/>
</dbReference>
<dbReference type="GO" id="GO:0038096">
    <property type="term" value="P:Fc-gamma receptor signaling pathway involved in phagocytosis"/>
    <property type="evidence" value="ECO:0000304"/>
    <property type="project" value="Reactome"/>
</dbReference>
<dbReference type="GO" id="GO:0002768">
    <property type="term" value="P:immune response-regulating cell surface receptor signaling pathway"/>
    <property type="evidence" value="ECO:0000318"/>
    <property type="project" value="GO_Central"/>
</dbReference>
<dbReference type="GO" id="GO:0007229">
    <property type="term" value="P:integrin-mediated signaling pathway"/>
    <property type="evidence" value="ECO:0007669"/>
    <property type="project" value="Ensembl"/>
</dbReference>
<dbReference type="GO" id="GO:0030032">
    <property type="term" value="P:lamellipodium assembly"/>
    <property type="evidence" value="ECO:0007669"/>
    <property type="project" value="Ensembl"/>
</dbReference>
<dbReference type="GO" id="GO:0030593">
    <property type="term" value="P:neutrophil chemotaxis"/>
    <property type="evidence" value="ECO:0007669"/>
    <property type="project" value="Ensembl"/>
</dbReference>
<dbReference type="GO" id="GO:0030168">
    <property type="term" value="P:platelet activation"/>
    <property type="evidence" value="ECO:0000304"/>
    <property type="project" value="Reactome"/>
</dbReference>
<dbReference type="GO" id="GO:0030890">
    <property type="term" value="P:positive regulation of B cell proliferation"/>
    <property type="evidence" value="ECO:0000315"/>
    <property type="project" value="UniProtKB"/>
</dbReference>
<dbReference type="GO" id="GO:0045785">
    <property type="term" value="P:positive regulation of cell adhesion"/>
    <property type="evidence" value="ECO:0007669"/>
    <property type="project" value="Ensembl"/>
</dbReference>
<dbReference type="GO" id="GO:0051897">
    <property type="term" value="P:positive regulation of phosphatidylinositol 3-kinase/protein kinase B signal transduction"/>
    <property type="evidence" value="ECO:0000318"/>
    <property type="project" value="GO_Central"/>
</dbReference>
<dbReference type="GO" id="GO:0008361">
    <property type="term" value="P:regulation of cell size"/>
    <property type="evidence" value="ECO:0000316"/>
    <property type="project" value="UniProtKB"/>
</dbReference>
<dbReference type="GO" id="GO:0043087">
    <property type="term" value="P:regulation of GTPase activity"/>
    <property type="evidence" value="ECO:0000316"/>
    <property type="project" value="UniProtKB"/>
</dbReference>
<dbReference type="GO" id="GO:0051056">
    <property type="term" value="P:regulation of small GTPase mediated signal transduction"/>
    <property type="evidence" value="ECO:0000304"/>
    <property type="project" value="Reactome"/>
</dbReference>
<dbReference type="GO" id="GO:0009410">
    <property type="term" value="P:response to xenobiotic stimulus"/>
    <property type="evidence" value="ECO:0000315"/>
    <property type="project" value="UniProtKB"/>
</dbReference>
<dbReference type="GO" id="GO:0007264">
    <property type="term" value="P:small GTPase-mediated signal transduction"/>
    <property type="evidence" value="ECO:0000318"/>
    <property type="project" value="GO_Central"/>
</dbReference>
<dbReference type="GO" id="GO:0006906">
    <property type="term" value="P:vesicle fusion"/>
    <property type="evidence" value="ECO:0007669"/>
    <property type="project" value="Ensembl"/>
</dbReference>
<dbReference type="CDD" id="cd20869">
    <property type="entry name" value="C1_VAV3"/>
    <property type="match status" value="1"/>
</dbReference>
<dbReference type="CDD" id="cd21264">
    <property type="entry name" value="CH_VAV3"/>
    <property type="match status" value="1"/>
</dbReference>
<dbReference type="CDD" id="cd01223">
    <property type="entry name" value="PH_Vav"/>
    <property type="match status" value="1"/>
</dbReference>
<dbReference type="CDD" id="cd00160">
    <property type="entry name" value="RhoGEF"/>
    <property type="match status" value="1"/>
</dbReference>
<dbReference type="CDD" id="cd10407">
    <property type="entry name" value="SH2_Vav3"/>
    <property type="match status" value="1"/>
</dbReference>
<dbReference type="CDD" id="cd11981">
    <property type="entry name" value="SH3_VAV3_1"/>
    <property type="match status" value="1"/>
</dbReference>
<dbReference type="CDD" id="cd11978">
    <property type="entry name" value="SH3_VAV3_2"/>
    <property type="match status" value="1"/>
</dbReference>
<dbReference type="FunFam" id="1.20.900.10:FF:000009">
    <property type="entry name" value="Vav guanine nucleotide exchange factor 1"/>
    <property type="match status" value="1"/>
</dbReference>
<dbReference type="FunFam" id="3.30.60.20:FF:000015">
    <property type="entry name" value="Vav guanine nucleotide exchange factor 1"/>
    <property type="match status" value="1"/>
</dbReference>
<dbReference type="FunFam" id="1.10.418.10:FF:000019">
    <property type="entry name" value="Vav guanine nucleotide exchange factor 2"/>
    <property type="match status" value="1"/>
</dbReference>
<dbReference type="FunFam" id="2.30.29.30:FF:000050">
    <property type="entry name" value="Vav guanine nucleotide exchange factor 2"/>
    <property type="match status" value="1"/>
</dbReference>
<dbReference type="FunFam" id="3.30.505.10:FF:000024">
    <property type="entry name" value="Vav guanine nucleotide exchange factor 2"/>
    <property type="match status" value="1"/>
</dbReference>
<dbReference type="FunFam" id="2.30.30.40:FF:000039">
    <property type="entry name" value="Vav guanine nucleotide exchange factor 3"/>
    <property type="match status" value="1"/>
</dbReference>
<dbReference type="Gene3D" id="3.30.60.20">
    <property type="match status" value="1"/>
</dbReference>
<dbReference type="Gene3D" id="1.10.418.10">
    <property type="entry name" value="Calponin-like domain"/>
    <property type="match status" value="1"/>
</dbReference>
<dbReference type="Gene3D" id="1.20.900.10">
    <property type="entry name" value="Dbl homology (DH) domain"/>
    <property type="match status" value="1"/>
</dbReference>
<dbReference type="Gene3D" id="2.30.29.30">
    <property type="entry name" value="Pleckstrin-homology domain (PH domain)/Phosphotyrosine-binding domain (PTB)"/>
    <property type="match status" value="1"/>
</dbReference>
<dbReference type="Gene3D" id="3.30.505.10">
    <property type="entry name" value="SH2 domain"/>
    <property type="match status" value="1"/>
</dbReference>
<dbReference type="Gene3D" id="2.30.30.40">
    <property type="entry name" value="SH3 Domains"/>
    <property type="match status" value="2"/>
</dbReference>
<dbReference type="InterPro" id="IPR022613">
    <property type="entry name" value="CAMSAP-like_CH_dom"/>
</dbReference>
<dbReference type="InterPro" id="IPR001715">
    <property type="entry name" value="CH_dom"/>
</dbReference>
<dbReference type="InterPro" id="IPR036872">
    <property type="entry name" value="CH_dom_sf"/>
</dbReference>
<dbReference type="InterPro" id="IPR035899">
    <property type="entry name" value="DBL_dom_sf"/>
</dbReference>
<dbReference type="InterPro" id="IPR000219">
    <property type="entry name" value="DH_dom"/>
</dbReference>
<dbReference type="InterPro" id="IPR001331">
    <property type="entry name" value="GDS_CDC24_CS"/>
</dbReference>
<dbReference type="InterPro" id="IPR002219">
    <property type="entry name" value="PE/DAG-bd"/>
</dbReference>
<dbReference type="InterPro" id="IPR011993">
    <property type="entry name" value="PH-like_dom_sf"/>
</dbReference>
<dbReference type="InterPro" id="IPR001849">
    <property type="entry name" value="PH_domain"/>
</dbReference>
<dbReference type="InterPro" id="IPR037832">
    <property type="entry name" value="PH_Vav"/>
</dbReference>
<dbReference type="InterPro" id="IPR000980">
    <property type="entry name" value="SH2"/>
</dbReference>
<dbReference type="InterPro" id="IPR036860">
    <property type="entry name" value="SH2_dom_sf"/>
</dbReference>
<dbReference type="InterPro" id="IPR036028">
    <property type="entry name" value="SH3-like_dom_sf"/>
</dbReference>
<dbReference type="InterPro" id="IPR001452">
    <property type="entry name" value="SH3_domain"/>
</dbReference>
<dbReference type="InterPro" id="IPR003096">
    <property type="entry name" value="SM22_calponin"/>
</dbReference>
<dbReference type="InterPro" id="IPR055251">
    <property type="entry name" value="SOS1_NGEF_PH"/>
</dbReference>
<dbReference type="InterPro" id="IPR035881">
    <property type="entry name" value="VAV3_SH2"/>
</dbReference>
<dbReference type="InterPro" id="IPR047015">
    <property type="entry name" value="VAV3_SH3_1"/>
</dbReference>
<dbReference type="InterPro" id="IPR035734">
    <property type="entry name" value="VAV3_SH3_2"/>
</dbReference>
<dbReference type="PANTHER" id="PTHR45818:SF1">
    <property type="entry name" value="GUANINE NUCLEOTIDE EXCHANGE FACTOR VAV3"/>
    <property type="match status" value="1"/>
</dbReference>
<dbReference type="PANTHER" id="PTHR45818">
    <property type="entry name" value="PROTEIN VAV"/>
    <property type="match status" value="1"/>
</dbReference>
<dbReference type="Pfam" id="PF00130">
    <property type="entry name" value="C1_1"/>
    <property type="match status" value="1"/>
</dbReference>
<dbReference type="Pfam" id="PF11971">
    <property type="entry name" value="CAMSAP_CH"/>
    <property type="match status" value="1"/>
</dbReference>
<dbReference type="Pfam" id="PF00621">
    <property type="entry name" value="RhoGEF"/>
    <property type="match status" value="1"/>
</dbReference>
<dbReference type="Pfam" id="PF00017">
    <property type="entry name" value="SH2"/>
    <property type="match status" value="1"/>
</dbReference>
<dbReference type="Pfam" id="PF07653">
    <property type="entry name" value="SH3_2"/>
    <property type="match status" value="2"/>
</dbReference>
<dbReference type="Pfam" id="PF22697">
    <property type="entry name" value="SOS1_NGEF_PH"/>
    <property type="match status" value="1"/>
</dbReference>
<dbReference type="PRINTS" id="PR00401">
    <property type="entry name" value="SH2DOMAIN"/>
</dbReference>
<dbReference type="PRINTS" id="PR00452">
    <property type="entry name" value="SH3DOMAIN"/>
</dbReference>
<dbReference type="PRINTS" id="PR00888">
    <property type="entry name" value="SM22CALPONIN"/>
</dbReference>
<dbReference type="SMART" id="SM00109">
    <property type="entry name" value="C1"/>
    <property type="match status" value="1"/>
</dbReference>
<dbReference type="SMART" id="SM00033">
    <property type="entry name" value="CH"/>
    <property type="match status" value="1"/>
</dbReference>
<dbReference type="SMART" id="SM00233">
    <property type="entry name" value="PH"/>
    <property type="match status" value="1"/>
</dbReference>
<dbReference type="SMART" id="SM00325">
    <property type="entry name" value="RhoGEF"/>
    <property type="match status" value="1"/>
</dbReference>
<dbReference type="SMART" id="SM00252">
    <property type="entry name" value="SH2"/>
    <property type="match status" value="1"/>
</dbReference>
<dbReference type="SMART" id="SM00326">
    <property type="entry name" value="SH3"/>
    <property type="match status" value="2"/>
</dbReference>
<dbReference type="SUPFAM" id="SSF47576">
    <property type="entry name" value="Calponin-homology domain, CH-domain"/>
    <property type="match status" value="1"/>
</dbReference>
<dbReference type="SUPFAM" id="SSF48065">
    <property type="entry name" value="DBL homology domain (DH-domain)"/>
    <property type="match status" value="1"/>
</dbReference>
<dbReference type="SUPFAM" id="SSF50729">
    <property type="entry name" value="PH domain-like"/>
    <property type="match status" value="1"/>
</dbReference>
<dbReference type="SUPFAM" id="SSF55550">
    <property type="entry name" value="SH2 domain"/>
    <property type="match status" value="1"/>
</dbReference>
<dbReference type="SUPFAM" id="SSF50044">
    <property type="entry name" value="SH3-domain"/>
    <property type="match status" value="2"/>
</dbReference>
<dbReference type="PROSITE" id="PS50021">
    <property type="entry name" value="CH"/>
    <property type="match status" value="1"/>
</dbReference>
<dbReference type="PROSITE" id="PS00741">
    <property type="entry name" value="DH_1"/>
    <property type="match status" value="1"/>
</dbReference>
<dbReference type="PROSITE" id="PS50010">
    <property type="entry name" value="DH_2"/>
    <property type="match status" value="1"/>
</dbReference>
<dbReference type="PROSITE" id="PS50003">
    <property type="entry name" value="PH_DOMAIN"/>
    <property type="match status" value="1"/>
</dbReference>
<dbReference type="PROSITE" id="PS50001">
    <property type="entry name" value="SH2"/>
    <property type="match status" value="1"/>
</dbReference>
<dbReference type="PROSITE" id="PS50002">
    <property type="entry name" value="SH3"/>
    <property type="match status" value="2"/>
</dbReference>
<dbReference type="PROSITE" id="PS00479">
    <property type="entry name" value="ZF_DAG_PE_1"/>
    <property type="match status" value="1"/>
</dbReference>
<dbReference type="PROSITE" id="PS50081">
    <property type="entry name" value="ZF_DAG_PE_2"/>
    <property type="match status" value="1"/>
</dbReference>
<sequence length="847" mass="97776">MEPWKQCAQWLIHCKVLPTNHRVTWDSAQVFDLAQTLRDGVLLCQLLNNLRAHSINLKEINLRPQMSQFLCLKNIRTFLTACCETFGMRKSELFEAFDLFDVRDFGKVIETLSRLSRTPIALATGIRPFPTEESINDEDIYKGLPDLIDETLVEDEEDLYDCVYGEDEGGEVYEDLMKAEEAHQPKCPENDIRSCCLAEIKQTEEKYTETLESIEKYFMAPLKRFLTAAEFDSVFINIPELVKLHRNLMQEIHDSIVNKNDQNLYQVFINYKERLVIYGQYCSGVESAISSLDYISKTKEDVKLKLEECSKRANNGKFTLRDLLVVPMQRVLKYHLLLQELVKHTTDPTEKANLKLALDAMKDLAQYVNEVKRDNETLREIKQFQLSIENLNQPVLLFGRPQGDGEIRITTLDKHTKQERHIFLFDLAVIVCKRKGDNYEMKEIIDLQQYKIANNPTTDKENKKWSYGFYLIHTQGQNGLEFYCKTKDLKKKWLEQFEMALSNIRPDYADSNFHDFKMHTFTRVTSCKVCQMLLRGTFYQGYLCFKCGARAHKECLGRVDNCGRVNSGEQGTLKLPEKRTNGLRRTPKQVDPGLPKMQVIRNYSGTPPPALHEGPPLQLQAGDTVELLKGDAHSLFWQGRNLASGEVGFFPSDAVKPCPCVPKPVDYSCQPWYAGAMERLQAETELINRVNSTYLVRHRTKESGEYAISIKYNNEAKHIKILTRDGFFHIAENRKFKSLMELVEYYKHHSLKEGFRTLDTTLQFPYKEPEHSAGQRGNRAGNSLLSPKVLGIAIARYDFCARDMRELSLLKGDVVKIYTKMSANGWWRGEVNGRVGWFPSTYVEEDE</sequence>